<accession>G3Y417</accession>
<gene>
    <name evidence="6" type="primary">yanB</name>
    <name type="ORF">ASPNIDRAFT_44963</name>
</gene>
<reference key="1">
    <citation type="journal article" date="2011" name="Genome Res.">
        <title>Comparative genomics of citric-acid-producing Aspergillus niger ATCC 1015 versus enzyme-producing CBS 513.88.</title>
        <authorList>
            <person name="Andersen M.R."/>
            <person name="Salazar M.P."/>
            <person name="Schaap P.J."/>
            <person name="van de Vondervoort P.J.I."/>
            <person name="Culley D."/>
            <person name="Thykaer J."/>
            <person name="Frisvad J.C."/>
            <person name="Nielsen K.F."/>
            <person name="Albang R."/>
            <person name="Albermann K."/>
            <person name="Berka R.M."/>
            <person name="Braus G.H."/>
            <person name="Braus-Stromeyer S.A."/>
            <person name="Corrochano L.M."/>
            <person name="Dai Z."/>
            <person name="van Dijck P.W.M."/>
            <person name="Hofmann G."/>
            <person name="Lasure L.L."/>
            <person name="Magnuson J.K."/>
            <person name="Menke H."/>
            <person name="Meijer M."/>
            <person name="Meijer S.L."/>
            <person name="Nielsen J.B."/>
            <person name="Nielsen M.L."/>
            <person name="van Ooyen A.J.J."/>
            <person name="Pel H.J."/>
            <person name="Poulsen L."/>
            <person name="Samson R.A."/>
            <person name="Stam H."/>
            <person name="Tsang A."/>
            <person name="van den Brink J.M."/>
            <person name="Atkins A."/>
            <person name="Aerts A."/>
            <person name="Shapiro H."/>
            <person name="Pangilinan J."/>
            <person name="Salamov A."/>
            <person name="Lou Y."/>
            <person name="Lindquist E."/>
            <person name="Lucas S."/>
            <person name="Grimwood J."/>
            <person name="Grigoriev I.V."/>
            <person name="Kubicek C.P."/>
            <person name="Martinez D."/>
            <person name="van Peij N.N.M.E."/>
            <person name="Roubos J.A."/>
            <person name="Nielsen J."/>
            <person name="Baker S.E."/>
        </authorList>
    </citation>
    <scope>NUCLEOTIDE SEQUENCE [LARGE SCALE GENOMIC DNA]</scope>
    <source>
        <strain>ATCC 1015 / CBS 113.46 / FGSC A1144 / LSHB Ac4 / NCTC 3858a / NRRL 328 / USDA 3528.7</strain>
    </source>
</reference>
<reference key="2">
    <citation type="journal article" date="2000" name="J. Org. Chem.">
        <title>Yanuthones: novel metabolites from a marine isolate of Aspergillus niger.</title>
        <authorList>
            <person name="Bugni T.S."/>
            <person name="Abbanat D."/>
            <person name="Bernan V.S."/>
            <person name="Maiese W.M."/>
            <person name="Greenstein M."/>
            <person name="Van Wagoner R.M."/>
            <person name="Ireland C.M."/>
        </authorList>
    </citation>
    <scope>BIOTECHNOLOGY</scope>
</reference>
<reference key="3">
    <citation type="journal article" date="2014" name="Chem. Biol.">
        <title>Molecular and chemical characterization of the biosynthesis of the 6-MSA-derived meroterpenoid yanuthone D in Aspergillus niger.</title>
        <authorList>
            <person name="Holm D.K."/>
            <person name="Petersen L.M."/>
            <person name="Klitgaard A."/>
            <person name="Knudsen P.B."/>
            <person name="Jarczynska Z.D."/>
            <person name="Nielsen K.F."/>
            <person name="Gotfredsen C.H."/>
            <person name="Larsen T.O."/>
            <person name="Mortensen U.H."/>
        </authorList>
    </citation>
    <scope>FUNCTION</scope>
    <scope>DISRUPTION PHENOTYPE</scope>
</reference>
<comment type="function">
    <text evidence="5">Decarboxylase; part of the gene cluster that mediates the biosynthesis of yanuthone D, a fungal isoprenoid epoxycyclohexenone that acts as an antibiotic against fungi and bacteria (PubMed:24684908). The first step of the pathway is the synthesis of 6-methylsalicylic acid (6-MSA) by the polyketide synthase yanA (PubMed:24684908). 6-MSA is then converted to m-cresol by the decarboxylase yanB (PubMed:24684908). The cytochrome P450 monooxygenase yanC then catalyzes the oxidation of m-cresol to toluquinol (PubMed:24684908). Epoxidation of toluquinol is then performed by the short chain dehydrogenase yanD, with the help of yanE, and a further prenylation by yanG leads to 7-deacetoxyyanuthone A (PubMed:24684908). The next step is the hydroxylation of C-22 of 7-deacetoxyyanuthone A by the cytochrome P450 monooxygenase yanH to yield 22-deacetylyanuthone A (PubMed:24684908). O-Mevalon transferase yanI then attaches mevalon to the hydroxyl group of 22-deacetylyanuthone A to produce yanuthone E (PubMed:24684908). Finally, the FAD-dependent monooxygenase yanF oxidizes the hydroxyl group at C15 of yanuthone E to form yanuthone D (PubMed:24684908). Furthermore, several branching points in the pathway lead to the production of yanuthones F and G from 7-deacetoxyyanuthone A; yanuthones H and I from 22-deacetylyanuthone A; and yanuthone J from yanuthone E (PubMed:24684908).</text>
</comment>
<comment type="catalytic activity">
    <reaction evidence="8">
        <text>6-methylsalicylate + H(+) = 3-methylphenol + CO2</text>
        <dbReference type="Rhea" id="RHEA:23112"/>
        <dbReference type="ChEBI" id="CHEBI:15378"/>
        <dbReference type="ChEBI" id="CHEBI:16526"/>
        <dbReference type="ChEBI" id="CHEBI:17231"/>
        <dbReference type="ChEBI" id="CHEBI:36658"/>
        <dbReference type="EC" id="4.1.1.52"/>
    </reaction>
    <physiologicalReaction direction="left-to-right" evidence="8">
        <dbReference type="Rhea" id="RHEA:23113"/>
    </physiologicalReaction>
</comment>
<comment type="pathway">
    <text evidence="5">Secondary metabolite biosynthesis; terpenoid biosynthesis.</text>
</comment>
<comment type="subcellular location">
    <subcellularLocation>
        <location evidence="2">Membrane</location>
        <topology evidence="2">Single-pass membrane protein</topology>
    </subcellularLocation>
</comment>
<comment type="disruption phenotype">
    <text evidence="5">Loses the ability to produce yanuthone D (PubMed:24684908).</text>
</comment>
<comment type="biotechnology">
    <text evidence="4">Yanuthone D is an antibiotic against C.albicans, methicillin-resistant S.aureus (MRSA), and vancomycin-resistant Enterococcus (PubMed:11031048).</text>
</comment>
<comment type="similarity">
    <text evidence="7">Belongs to the metallo-dependent hydrolases superfamily. ACMSD family.</text>
</comment>
<feature type="chain" id="PRO_0000436761" description="Decarboxylase yanB">
    <location>
        <begin position="1"/>
        <end position="368"/>
    </location>
</feature>
<feature type="transmembrane region" description="Helical" evidence="2">
    <location>
        <begin position="339"/>
        <end position="359"/>
    </location>
</feature>
<feature type="binding site" evidence="1">
    <location>
        <position position="7"/>
    </location>
    <ligand>
        <name>Zn(2+)</name>
        <dbReference type="ChEBI" id="CHEBI:29105"/>
    </ligand>
</feature>
<feature type="binding site" evidence="1">
    <location>
        <position position="9"/>
    </location>
    <ligand>
        <name>Zn(2+)</name>
        <dbReference type="ChEBI" id="CHEBI:29105"/>
    </ligand>
</feature>
<feature type="binding site" evidence="1">
    <location>
        <position position="159"/>
    </location>
    <ligand>
        <name>Zn(2+)</name>
        <dbReference type="ChEBI" id="CHEBI:29105"/>
    </ligand>
</feature>
<feature type="binding site" evidence="1">
    <location>
        <position position="283"/>
    </location>
    <ligand>
        <name>Zn(2+)</name>
        <dbReference type="ChEBI" id="CHEBI:29105"/>
    </ligand>
</feature>
<feature type="glycosylation site" description="N-linked (GlcNAc...) asparagine" evidence="3">
    <location>
        <position position="169"/>
    </location>
</feature>
<protein>
    <recommendedName>
        <fullName evidence="6">Decarboxylase yanB</fullName>
        <ecNumber evidence="8">4.1.1.52</ecNumber>
    </recommendedName>
    <alternativeName>
        <fullName evidence="6">Yanuthone D biosynthesis cluster protein B</fullName>
    </alternativeName>
</protein>
<sequence length="368" mass="40345">MDRIDVHHHFIPPAYVEAFKTTGGDPSGWHLPQWTPESSLSLMDSHNTRTAILSLTAPGTSILAHSPGASATLAREINLYAAKLHNENPTRFGFFASLPHLTPDTIPAAIEEAIYALETLHADGITLYTRYTGTGYLGHDAFAPLWEELNRRKAVVFIHPTNTAADARNRSILVNPALPQPIIDYPHETCRTAVDLITSGTISRNPDVKIILSHGGGTLPILATRAAHLLYDAKLTSISPEDFLEQARSFYFDLALSGNDENMQLLVGRNGFAKGGHVFYGSDFPYAPVSTINKYVRMMEGFSVQGEEVEKAIARDSAVKLFPRFQMPADLRVGKTNNWGAFSACLLLPVGLSALYSVLQSRVHTYST</sequence>
<proteinExistence type="evidence at protein level"/>
<dbReference type="EC" id="4.1.1.52" evidence="8"/>
<dbReference type="EMBL" id="ACJE01000012">
    <property type="protein sequence ID" value="EHA22194.1"/>
    <property type="molecule type" value="Genomic_DNA"/>
</dbReference>
<dbReference type="SMR" id="G3Y417"/>
<dbReference type="STRING" id="380704.G3Y417"/>
<dbReference type="GlyCosmos" id="G3Y417">
    <property type="glycosylation" value="1 site, No reported glycans"/>
</dbReference>
<dbReference type="HOGENOM" id="CLU_039329_2_1_1"/>
<dbReference type="OrthoDB" id="5637at5052"/>
<dbReference type="UniPathway" id="UPA00213"/>
<dbReference type="Proteomes" id="UP000009038">
    <property type="component" value="Unassembled WGS sequence"/>
</dbReference>
<dbReference type="GO" id="GO:0005829">
    <property type="term" value="C:cytosol"/>
    <property type="evidence" value="ECO:0007669"/>
    <property type="project" value="TreeGrafter"/>
</dbReference>
<dbReference type="GO" id="GO:0016020">
    <property type="term" value="C:membrane"/>
    <property type="evidence" value="ECO:0007669"/>
    <property type="project" value="UniProtKB-SubCell"/>
</dbReference>
<dbReference type="GO" id="GO:0047596">
    <property type="term" value="F:6-methylsalicylate decarboxylase activity"/>
    <property type="evidence" value="ECO:0007669"/>
    <property type="project" value="UniProtKB-EC"/>
</dbReference>
<dbReference type="GO" id="GO:0016787">
    <property type="term" value="F:hydrolase activity"/>
    <property type="evidence" value="ECO:0007669"/>
    <property type="project" value="InterPro"/>
</dbReference>
<dbReference type="GO" id="GO:0046872">
    <property type="term" value="F:metal ion binding"/>
    <property type="evidence" value="ECO:0007669"/>
    <property type="project" value="UniProtKB-KW"/>
</dbReference>
<dbReference type="GO" id="GO:0019748">
    <property type="term" value="P:secondary metabolic process"/>
    <property type="evidence" value="ECO:0007669"/>
    <property type="project" value="TreeGrafter"/>
</dbReference>
<dbReference type="GO" id="GO:0016114">
    <property type="term" value="P:terpenoid biosynthetic process"/>
    <property type="evidence" value="ECO:0007669"/>
    <property type="project" value="UniProtKB-UniPathway"/>
</dbReference>
<dbReference type="Gene3D" id="3.20.20.140">
    <property type="entry name" value="Metal-dependent hydrolases"/>
    <property type="match status" value="1"/>
</dbReference>
<dbReference type="InterPro" id="IPR032465">
    <property type="entry name" value="ACMSD"/>
</dbReference>
<dbReference type="InterPro" id="IPR006680">
    <property type="entry name" value="Amidohydro-rel"/>
</dbReference>
<dbReference type="InterPro" id="IPR032466">
    <property type="entry name" value="Metal_Hydrolase"/>
</dbReference>
<dbReference type="PANTHER" id="PTHR21240">
    <property type="entry name" value="2-AMINO-3-CARBOXYLMUCONATE-6-SEMIALDEHYDE DECARBOXYLASE"/>
    <property type="match status" value="1"/>
</dbReference>
<dbReference type="PANTHER" id="PTHR21240:SF29">
    <property type="entry name" value="AMIDOHYDROLASE-RELATED DOMAIN-CONTAINING PROTEIN"/>
    <property type="match status" value="1"/>
</dbReference>
<dbReference type="Pfam" id="PF04909">
    <property type="entry name" value="Amidohydro_2"/>
    <property type="match status" value="1"/>
</dbReference>
<dbReference type="SUPFAM" id="SSF51556">
    <property type="entry name" value="Metallo-dependent hydrolases"/>
    <property type="match status" value="1"/>
</dbReference>
<keyword id="KW-0210">Decarboxylase</keyword>
<keyword id="KW-0325">Glycoprotein</keyword>
<keyword id="KW-0456">Lyase</keyword>
<keyword id="KW-0472">Membrane</keyword>
<keyword id="KW-0479">Metal-binding</keyword>
<keyword id="KW-0812">Transmembrane</keyword>
<keyword id="KW-1133">Transmembrane helix</keyword>
<keyword id="KW-0862">Zinc</keyword>
<organism>
    <name type="scientific">Aspergillus niger (strain ATCC 1015 / CBS 113.46 / FGSC A1144 / LSHB Ac4 / NCTC 3858a / NRRL 328 / USDA 3528.7)</name>
    <dbReference type="NCBI Taxonomy" id="380704"/>
    <lineage>
        <taxon>Eukaryota</taxon>
        <taxon>Fungi</taxon>
        <taxon>Dikarya</taxon>
        <taxon>Ascomycota</taxon>
        <taxon>Pezizomycotina</taxon>
        <taxon>Eurotiomycetes</taxon>
        <taxon>Eurotiomycetidae</taxon>
        <taxon>Eurotiales</taxon>
        <taxon>Aspergillaceae</taxon>
        <taxon>Aspergillus</taxon>
        <taxon>Aspergillus subgen. Circumdati</taxon>
    </lineage>
</organism>
<name>YANB_ASPNA</name>
<evidence type="ECO:0000250" key="1">
    <source>
        <dbReference type="UniProtKB" id="Q8TDX5"/>
    </source>
</evidence>
<evidence type="ECO:0000255" key="2"/>
<evidence type="ECO:0000255" key="3">
    <source>
        <dbReference type="PROSITE-ProRule" id="PRU00498"/>
    </source>
</evidence>
<evidence type="ECO:0000269" key="4">
    <source>
    </source>
</evidence>
<evidence type="ECO:0000269" key="5">
    <source>
    </source>
</evidence>
<evidence type="ECO:0000303" key="6">
    <source>
    </source>
</evidence>
<evidence type="ECO:0000305" key="7"/>
<evidence type="ECO:0000305" key="8">
    <source>
    </source>
</evidence>